<organism>
    <name type="scientific">Cupriavidus necator (strain ATCC 17699 / DSM 428 / KCTC 22496 / NCIMB 10442 / H16 / Stanier 337)</name>
    <name type="common">Ralstonia eutropha</name>
    <dbReference type="NCBI Taxonomy" id="381666"/>
    <lineage>
        <taxon>Bacteria</taxon>
        <taxon>Pseudomonadati</taxon>
        <taxon>Pseudomonadota</taxon>
        <taxon>Betaproteobacteria</taxon>
        <taxon>Burkholderiales</taxon>
        <taxon>Burkholderiaceae</taxon>
        <taxon>Cupriavidus</taxon>
    </lineage>
</organism>
<evidence type="ECO:0000255" key="1"/>
<evidence type="ECO:0000305" key="2"/>
<reference key="1">
    <citation type="journal article" date="1992" name="J. Bacteriol.">
        <title>A gene complex coding for the membrane-bound hydrogenase of Alcaligenes eutrophus H16.</title>
        <authorList>
            <person name="Kortlueke C."/>
            <person name="Horstmann K."/>
            <person name="Schwartz E."/>
            <person name="Rohde M."/>
            <person name="Binsack R."/>
            <person name="Friedrich B."/>
        </authorList>
    </citation>
    <scope>NUCLEOTIDE SEQUENCE [GENOMIC DNA]</scope>
</reference>
<reference key="2">
    <citation type="journal article" date="2003" name="J. Mol. Biol.">
        <title>Complete nucleotide sequence of pHG1: a Ralstonia eutropha H16 megaplasmid encoding key enzymes of H(2)-based lithoautotrophy and anaerobiosis.</title>
        <authorList>
            <person name="Schwartz E."/>
            <person name="Henne A."/>
            <person name="Cramm R."/>
            <person name="Eitinger T."/>
            <person name="Friedrich B."/>
            <person name="Gottschalk G."/>
        </authorList>
    </citation>
    <scope>NUCLEOTIDE SEQUENCE [LARGE SCALE GENOMIC DNA]</scope>
    <source>
        <strain>ATCC 17699 / DSM 428 / KCTC 22496 / NCIMB 10442 / H16 / Stanier 337</strain>
    </source>
</reference>
<comment type="function">
    <text>Probable b-type cytochrome.</text>
</comment>
<comment type="subcellular location">
    <subcellularLocation>
        <location>Cell membrane</location>
        <topology>Multi-pass membrane protein</topology>
    </subcellularLocation>
</comment>
<comment type="similarity">
    <text evidence="2">Belongs to the HupC/HyaC/HydC family.</text>
</comment>
<keyword id="KW-1003">Cell membrane</keyword>
<keyword id="KW-0249">Electron transport</keyword>
<keyword id="KW-0349">Heme</keyword>
<keyword id="KW-0408">Iron</keyword>
<keyword id="KW-0472">Membrane</keyword>
<keyword id="KW-0479">Metal-binding</keyword>
<keyword id="KW-0614">Plasmid</keyword>
<keyword id="KW-1185">Reference proteome</keyword>
<keyword id="KW-0812">Transmembrane</keyword>
<keyword id="KW-1133">Transmembrane helix</keyword>
<keyword id="KW-0813">Transport</keyword>
<feature type="chain" id="PRO_0000201378" description="Probable Ni/Fe-hydrogenase B-type cytochrome subunit">
    <location>
        <begin position="1"/>
        <end position="244"/>
    </location>
</feature>
<feature type="transmembrane region" description="Helical" evidence="1">
    <location>
        <begin position="39"/>
        <end position="59"/>
    </location>
</feature>
<feature type="transmembrane region" description="Helical" evidence="1">
    <location>
        <begin position="73"/>
        <end position="93"/>
    </location>
</feature>
<feature type="transmembrane region" description="Helical" evidence="1">
    <location>
        <begin position="150"/>
        <end position="171"/>
    </location>
</feature>
<feature type="transmembrane region" description="Helical" evidence="1">
    <location>
        <begin position="204"/>
        <end position="221"/>
    </location>
</feature>
<dbReference type="EMBL" id="M96433">
    <property type="protein sequence ID" value="AAA16463.1"/>
    <property type="molecule type" value="Unassigned_DNA"/>
</dbReference>
<dbReference type="EMBL" id="AY305378">
    <property type="protein sequence ID" value="AAP85759.1"/>
    <property type="molecule type" value="Genomic_DNA"/>
</dbReference>
<dbReference type="PIR" id="C43255">
    <property type="entry name" value="C43255"/>
</dbReference>
<dbReference type="RefSeq" id="WP_011153928.1">
    <property type="nucleotide sequence ID" value="NC_005241.1"/>
</dbReference>
<dbReference type="KEGG" id="reh:PHG003"/>
<dbReference type="eggNOG" id="COG1969">
    <property type="taxonomic scope" value="Bacteria"/>
</dbReference>
<dbReference type="HOGENOM" id="CLU_075520_0_0_4"/>
<dbReference type="BioCyc" id="MetaCyc:MONOMER-12646"/>
<dbReference type="Proteomes" id="UP000008210">
    <property type="component" value="Plasmid megaplasmid pHG1"/>
</dbReference>
<dbReference type="GO" id="GO:0005886">
    <property type="term" value="C:plasma membrane"/>
    <property type="evidence" value="ECO:0007669"/>
    <property type="project" value="UniProtKB-SubCell"/>
</dbReference>
<dbReference type="GO" id="GO:0009055">
    <property type="term" value="F:electron transfer activity"/>
    <property type="evidence" value="ECO:0007669"/>
    <property type="project" value="InterPro"/>
</dbReference>
<dbReference type="GO" id="GO:0020037">
    <property type="term" value="F:heme binding"/>
    <property type="evidence" value="ECO:0007669"/>
    <property type="project" value="TreeGrafter"/>
</dbReference>
<dbReference type="GO" id="GO:0005506">
    <property type="term" value="F:iron ion binding"/>
    <property type="evidence" value="ECO:0007669"/>
    <property type="project" value="InterPro"/>
</dbReference>
<dbReference type="GO" id="GO:0022904">
    <property type="term" value="P:respiratory electron transport chain"/>
    <property type="evidence" value="ECO:0007669"/>
    <property type="project" value="InterPro"/>
</dbReference>
<dbReference type="FunFam" id="1.20.950.20:FF:000003">
    <property type="entry name" value="Ni/Fe-hydrogenase 1 b-type cytochrome subunit"/>
    <property type="match status" value="1"/>
</dbReference>
<dbReference type="Gene3D" id="1.20.950.20">
    <property type="entry name" value="Transmembrane di-heme cytochromes, Chain C"/>
    <property type="match status" value="1"/>
</dbReference>
<dbReference type="InterPro" id="IPR011577">
    <property type="entry name" value="Cyt_b561_bac/Ni-Hgenase"/>
</dbReference>
<dbReference type="InterPro" id="IPR016174">
    <property type="entry name" value="Di-haem_cyt_TM"/>
</dbReference>
<dbReference type="InterPro" id="IPR051542">
    <property type="entry name" value="Hydrogenase_cytochrome"/>
</dbReference>
<dbReference type="InterPro" id="IPR000516">
    <property type="entry name" value="Ni-dep_Hydgase_cyt-B"/>
</dbReference>
<dbReference type="NCBIfam" id="TIGR02125">
    <property type="entry name" value="CytB-hydogenase"/>
    <property type="match status" value="1"/>
</dbReference>
<dbReference type="PANTHER" id="PTHR30485">
    <property type="entry name" value="NI/FE-HYDROGENASE 1 B-TYPE CYTOCHROME SUBUNIT"/>
    <property type="match status" value="1"/>
</dbReference>
<dbReference type="PANTHER" id="PTHR30485:SF0">
    <property type="entry name" value="NI_FE-HYDROGENASE 1 B-TYPE CYTOCHROME SUBUNIT-RELATED"/>
    <property type="match status" value="1"/>
</dbReference>
<dbReference type="Pfam" id="PF01292">
    <property type="entry name" value="Ni_hydr_CYTB"/>
    <property type="match status" value="1"/>
</dbReference>
<dbReference type="PRINTS" id="PR00161">
    <property type="entry name" value="NIHGNASECYTB"/>
</dbReference>
<dbReference type="SUPFAM" id="SSF81342">
    <property type="entry name" value="Transmembrane di-heme cytochromes"/>
    <property type="match status" value="1"/>
</dbReference>
<dbReference type="PROSITE" id="PS00882">
    <property type="entry name" value="NI_HGENASE_CYTB_1"/>
    <property type="match status" value="1"/>
</dbReference>
<dbReference type="PROSITE" id="PS00883">
    <property type="entry name" value="NI_HGENASE_CYTB_2"/>
    <property type="match status" value="1"/>
</dbReference>
<sequence length="244" mass="27581">MSTKMQADRIADATGTDEGAVASGKSIKATYVYEAPVRLWHWVNALAIVVLAVTGFFIGSPPATRPGEASANFLMGYIRFAHFVAAYIFAIGMLGRIYWATAGNHHSRELFSVPVFTRAYWQEVISMLRWYAFLSARPSRYVGHNPLARFAMFFIFFLSSVFMILTGFAMYGEGAQMGSWQERMFGWVIPLLGQSQDVHTWHHLGMWFIVVFVIVHVYAAIREDIMGRQSVVSTMVSGYRTFKD</sequence>
<name>CYBH_CUPNH</name>
<proteinExistence type="inferred from homology"/>
<accession>P31898</accession>
<protein>
    <recommendedName>
        <fullName>Probable Ni/Fe-hydrogenase B-type cytochrome subunit</fullName>
    </recommendedName>
</protein>
<geneLocation type="plasmid">
    <name>megaplasmid pHG1</name>
</geneLocation>
<gene>
    <name type="primary">hoxZ</name>
    <name type="ordered locus">PHG003</name>
</gene>